<reference key="1">
    <citation type="submission" date="2003-03" db="EMBL/GenBank/DDBJ databases">
        <title>African swine fever virus genomes.</title>
        <authorList>
            <person name="Kutish G.F."/>
            <person name="Rock D.L."/>
        </authorList>
    </citation>
    <scope>NUCLEOTIDE SEQUENCE [LARGE SCALE GENOMIC DNA]</scope>
</reference>
<keyword id="KW-1043">Host membrane</keyword>
<keyword id="KW-0426">Late protein</keyword>
<keyword id="KW-0472">Membrane</keyword>
<keyword id="KW-0812">Transmembrane</keyword>
<keyword id="KW-1133">Transmembrane helix</keyword>
<evidence type="ECO:0000250" key="1">
    <source>
        <dbReference type="UniProtKB" id="Q65145"/>
    </source>
</evidence>
<evidence type="ECO:0000255" key="2"/>
<evidence type="ECO:0000305" key="3"/>
<accession>P0CA67</accession>
<sequence>MANPSKRIINKKSKQASISSILNFFFFYIMEYFVAVDNETSLGVFTSMEQCEETMKQYPGLHYVVFKYMCPADAENTDVVYLIPSLTLHTPMFVDHCPNRTKQARHVLKKINLVFEEESIENWKVSVNTVFPHVHNRLTAPKLSIDEANEAVEKFLIQAGRLMSL</sequence>
<name>VF165_ASFM2</name>
<organism>
    <name type="scientific">African swine fever virus (isolate Tick/Malawi/Lil 20-1/1983)</name>
    <name type="common">ASFV</name>
    <dbReference type="NCBI Taxonomy" id="10500"/>
    <lineage>
        <taxon>Viruses</taxon>
        <taxon>Varidnaviria</taxon>
        <taxon>Bamfordvirae</taxon>
        <taxon>Nucleocytoviricota</taxon>
        <taxon>Pokkesviricetes</taxon>
        <taxon>Asfuvirales</taxon>
        <taxon>Asfarviridae</taxon>
        <taxon>Asfivirus</taxon>
        <taxon>African swine fever virus</taxon>
    </lineage>
</organism>
<proteinExistence type="inferred from homology"/>
<protein>
    <recommendedName>
        <fullName>Uncharacterized protein F165R</fullName>
        <shortName>pF165R</shortName>
    </recommendedName>
</protein>
<dbReference type="EMBL" id="AY261361">
    <property type="status" value="NOT_ANNOTATED_CDS"/>
    <property type="molecule type" value="Genomic_DNA"/>
</dbReference>
<dbReference type="Proteomes" id="UP000000860">
    <property type="component" value="Segment"/>
</dbReference>
<dbReference type="GO" id="GO:0033644">
    <property type="term" value="C:host cell membrane"/>
    <property type="evidence" value="ECO:0007669"/>
    <property type="project" value="UniProtKB-SubCell"/>
</dbReference>
<dbReference type="GO" id="GO:0016020">
    <property type="term" value="C:membrane"/>
    <property type="evidence" value="ECO:0007669"/>
    <property type="project" value="UniProtKB-KW"/>
</dbReference>
<gene>
    <name type="ordered locus">Mal-054</name>
</gene>
<organismHost>
    <name type="scientific">Ornithodoros</name>
    <name type="common">relapsing fever ticks</name>
    <dbReference type="NCBI Taxonomy" id="6937"/>
</organismHost>
<organismHost>
    <name type="scientific">Phacochoerus aethiopicus</name>
    <name type="common">Warthog</name>
    <dbReference type="NCBI Taxonomy" id="85517"/>
</organismHost>
<organismHost>
    <name type="scientific">Phacochoerus africanus</name>
    <name type="common">Warthog</name>
    <dbReference type="NCBI Taxonomy" id="41426"/>
</organismHost>
<organismHost>
    <name type="scientific">Potamochoerus larvatus</name>
    <name type="common">Bushpig</name>
    <dbReference type="NCBI Taxonomy" id="273792"/>
</organismHost>
<organismHost>
    <name type="scientific">Sus scrofa</name>
    <name type="common">Pig</name>
    <dbReference type="NCBI Taxonomy" id="9823"/>
</organismHost>
<feature type="chain" id="PRO_0000373545" description="Uncharacterized protein F165R">
    <location>
        <begin position="1"/>
        <end position="165"/>
    </location>
</feature>
<feature type="transmembrane region" description="Helical" evidence="2">
    <location>
        <begin position="16"/>
        <end position="36"/>
    </location>
</feature>
<comment type="subcellular location">
    <subcellularLocation>
        <location evidence="3">Host membrane</location>
        <topology evidence="3">Single-pass membrane protein</topology>
    </subcellularLocation>
</comment>
<comment type="induction">
    <text evidence="1">Expressed in the late phase of the viral replicative cycle.</text>
</comment>
<comment type="similarity">
    <text evidence="3">Belongs to the asfivirus F165R family.</text>
</comment>